<protein>
    <recommendedName>
        <fullName evidence="1">Large ribosomal subunit protein uL23</fullName>
    </recommendedName>
    <alternativeName>
        <fullName evidence="2">50S ribosomal protein L23</fullName>
    </alternativeName>
</protein>
<gene>
    <name evidence="1" type="primary">rplW</name>
    <name type="ordered locus">LMHCC_2904</name>
</gene>
<dbReference type="EMBL" id="CP001175">
    <property type="protein sequence ID" value="ACK41235.1"/>
    <property type="molecule type" value="Genomic_DNA"/>
</dbReference>
<dbReference type="RefSeq" id="WP_003728540.1">
    <property type="nucleotide sequence ID" value="NC_011660.1"/>
</dbReference>
<dbReference type="SMR" id="B8DB10"/>
<dbReference type="GeneID" id="93240511"/>
<dbReference type="KEGG" id="lmh:LMHCC_2904"/>
<dbReference type="HOGENOM" id="CLU_037562_3_2_9"/>
<dbReference type="GO" id="GO:1990904">
    <property type="term" value="C:ribonucleoprotein complex"/>
    <property type="evidence" value="ECO:0007669"/>
    <property type="project" value="UniProtKB-KW"/>
</dbReference>
<dbReference type="GO" id="GO:0005840">
    <property type="term" value="C:ribosome"/>
    <property type="evidence" value="ECO:0007669"/>
    <property type="project" value="UniProtKB-KW"/>
</dbReference>
<dbReference type="GO" id="GO:0019843">
    <property type="term" value="F:rRNA binding"/>
    <property type="evidence" value="ECO:0007669"/>
    <property type="project" value="UniProtKB-UniRule"/>
</dbReference>
<dbReference type="GO" id="GO:0003735">
    <property type="term" value="F:structural constituent of ribosome"/>
    <property type="evidence" value="ECO:0007669"/>
    <property type="project" value="InterPro"/>
</dbReference>
<dbReference type="GO" id="GO:0006412">
    <property type="term" value="P:translation"/>
    <property type="evidence" value="ECO:0007669"/>
    <property type="project" value="UniProtKB-UniRule"/>
</dbReference>
<dbReference type="FunFam" id="3.30.70.330:FF:000001">
    <property type="entry name" value="50S ribosomal protein L23"/>
    <property type="match status" value="1"/>
</dbReference>
<dbReference type="Gene3D" id="3.30.70.330">
    <property type="match status" value="1"/>
</dbReference>
<dbReference type="HAMAP" id="MF_01369_B">
    <property type="entry name" value="Ribosomal_uL23_B"/>
    <property type="match status" value="1"/>
</dbReference>
<dbReference type="InterPro" id="IPR012677">
    <property type="entry name" value="Nucleotide-bd_a/b_plait_sf"/>
</dbReference>
<dbReference type="InterPro" id="IPR013025">
    <property type="entry name" value="Ribosomal_uL23-like"/>
</dbReference>
<dbReference type="InterPro" id="IPR012678">
    <property type="entry name" value="Ribosomal_uL23/eL15/eS24_sf"/>
</dbReference>
<dbReference type="NCBIfam" id="NF004363">
    <property type="entry name" value="PRK05738.2-4"/>
    <property type="match status" value="1"/>
</dbReference>
<dbReference type="PANTHER" id="PTHR11620">
    <property type="entry name" value="60S RIBOSOMAL PROTEIN L23A"/>
    <property type="match status" value="1"/>
</dbReference>
<dbReference type="Pfam" id="PF00276">
    <property type="entry name" value="Ribosomal_L23"/>
    <property type="match status" value="1"/>
</dbReference>
<dbReference type="SUPFAM" id="SSF54189">
    <property type="entry name" value="Ribosomal proteins S24e, L23 and L15e"/>
    <property type="match status" value="1"/>
</dbReference>
<comment type="function">
    <text evidence="1">One of the early assembly proteins it binds 23S rRNA. One of the proteins that surrounds the polypeptide exit tunnel on the outside of the ribosome. Forms the main docking site for trigger factor binding to the ribosome.</text>
</comment>
<comment type="subunit">
    <text evidence="1">Part of the 50S ribosomal subunit. Contacts protein L29, and trigger factor when it is bound to the ribosome.</text>
</comment>
<comment type="similarity">
    <text evidence="1">Belongs to the universal ribosomal protein uL23 family.</text>
</comment>
<accession>B8DB10</accession>
<proteinExistence type="inferred from homology"/>
<reference key="1">
    <citation type="journal article" date="2011" name="J. Bacteriol.">
        <title>Genome sequence of lineage III Listeria monocytogenes strain HCC23.</title>
        <authorList>
            <person name="Steele C.L."/>
            <person name="Donaldson J.R."/>
            <person name="Paul D."/>
            <person name="Banes M.M."/>
            <person name="Arick T."/>
            <person name="Bridges S.M."/>
            <person name="Lawrence M.L."/>
        </authorList>
    </citation>
    <scope>NUCLEOTIDE SEQUENCE [LARGE SCALE GENOMIC DNA]</scope>
    <source>
        <strain>HCC23</strain>
    </source>
</reference>
<organism>
    <name type="scientific">Listeria monocytogenes serotype 4a (strain HCC23)</name>
    <dbReference type="NCBI Taxonomy" id="552536"/>
    <lineage>
        <taxon>Bacteria</taxon>
        <taxon>Bacillati</taxon>
        <taxon>Bacillota</taxon>
        <taxon>Bacilli</taxon>
        <taxon>Bacillales</taxon>
        <taxon>Listeriaceae</taxon>
        <taxon>Listeria</taxon>
    </lineage>
</organism>
<name>RL23_LISMH</name>
<feature type="chain" id="PRO_1000184089" description="Large ribosomal subunit protein uL23">
    <location>
        <begin position="1"/>
        <end position="94"/>
    </location>
</feature>
<sequence length="94" mass="10930">MDARDIIKRPVVTEESTSILDDKKYTFEVDTRATKTQVKYAIEEIFDVKVAKVNVMNYKGKLKRMGRYAGYTNKRRKAIVTVTADSKEIQFFEV</sequence>
<evidence type="ECO:0000255" key="1">
    <source>
        <dbReference type="HAMAP-Rule" id="MF_01369"/>
    </source>
</evidence>
<evidence type="ECO:0000305" key="2"/>
<keyword id="KW-0687">Ribonucleoprotein</keyword>
<keyword id="KW-0689">Ribosomal protein</keyword>
<keyword id="KW-0694">RNA-binding</keyword>
<keyword id="KW-0699">rRNA-binding</keyword>